<organism>
    <name type="scientific">Macaca mulatta</name>
    <name type="common">Rhesus macaque</name>
    <dbReference type="NCBI Taxonomy" id="9544"/>
    <lineage>
        <taxon>Eukaryota</taxon>
        <taxon>Metazoa</taxon>
        <taxon>Chordata</taxon>
        <taxon>Craniata</taxon>
        <taxon>Vertebrata</taxon>
        <taxon>Euteleostomi</taxon>
        <taxon>Mammalia</taxon>
        <taxon>Eutheria</taxon>
        <taxon>Euarchontoglires</taxon>
        <taxon>Primates</taxon>
        <taxon>Haplorrhini</taxon>
        <taxon>Catarrhini</taxon>
        <taxon>Cercopithecidae</taxon>
        <taxon>Cercopithecinae</taxon>
        <taxon>Macaca</taxon>
    </lineage>
</organism>
<feature type="chain" id="PRO_0000220929" description="Tafazzin">
    <location>
        <begin position="1"/>
        <end position="262"/>
    </location>
</feature>
<feature type="topological domain" description="Mitochondrial intermembrane" evidence="2">
    <location>
        <begin position="1"/>
        <end position="14"/>
    </location>
</feature>
<feature type="intramembrane region" evidence="6">
    <location>
        <begin position="15"/>
        <end position="35"/>
    </location>
</feature>
<feature type="topological domain" description="Mitochondrial intermembrane" evidence="2">
    <location>
        <begin position="36"/>
        <end position="262"/>
    </location>
</feature>
<feature type="region of interest" description="Mitochondrial targeting sequence" evidence="2">
    <location>
        <begin position="82"/>
        <end position="92"/>
    </location>
</feature>
<feature type="region of interest" description="Mitochondrial targeting sequence" evidence="2">
    <location>
        <begin position="155"/>
        <end position="190"/>
    </location>
</feature>
<feature type="short sequence motif" description="HXXXXD motif" evidence="3">
    <location>
        <begin position="69"/>
        <end position="74"/>
    </location>
</feature>
<gene>
    <name type="primary">TAFAZZIN</name>
    <name type="synonym">TAZ</name>
</gene>
<name>TAZ_MACMU</name>
<evidence type="ECO:0000250" key="1">
    <source>
        <dbReference type="UniProtKB" id="Q06510"/>
    </source>
</evidence>
<evidence type="ECO:0000250" key="2">
    <source>
        <dbReference type="UniProtKB" id="Q16635"/>
    </source>
</evidence>
<evidence type="ECO:0000250" key="3">
    <source>
        <dbReference type="UniProtKB" id="Q3TFD2"/>
    </source>
</evidence>
<evidence type="ECO:0000250" key="4">
    <source>
        <dbReference type="UniProtKB" id="Q91WF0"/>
    </source>
</evidence>
<evidence type="ECO:0000250" key="5">
    <source>
        <dbReference type="UniProtKB" id="Q9V6G5"/>
    </source>
</evidence>
<evidence type="ECO:0000255" key="6"/>
<evidence type="ECO:0000305" key="7"/>
<keyword id="KW-0012">Acyltransferase</keyword>
<keyword id="KW-0443">Lipid metabolism</keyword>
<keyword id="KW-0472">Membrane</keyword>
<keyword id="KW-0496">Mitochondrion</keyword>
<keyword id="KW-0999">Mitochondrion inner membrane</keyword>
<keyword id="KW-1000">Mitochondrion outer membrane</keyword>
<keyword id="KW-1185">Reference proteome</keyword>
<keyword id="KW-0808">Transferase</keyword>
<protein>
    <recommendedName>
        <fullName>Tafazzin</fullName>
        <shortName>Taz</shortName>
        <ecNumber evidence="2">2.3.1.-</ecNumber>
    </recommendedName>
</protein>
<proteinExistence type="evidence at transcript level"/>
<accession>Q6IV77</accession>
<accession>Q6IV80</accession>
<reference key="1">
    <citation type="journal article" date="2005" name="Am. J. Med. Genet. A">
        <title>Barth syndrome: TAZ gene mutations, mRNAs, and evolution.</title>
        <authorList>
            <person name="Gonzalez I.L."/>
        </authorList>
    </citation>
    <scope>NUCLEOTIDE SEQUENCE [GENOMIC DNA / MRNA]</scope>
</reference>
<comment type="function">
    <text evidence="1 2 4 5">Acyltransferase required to remodel newly synthesized phospholipid cardiolipin (1',3'-bis-[1,2-diacyl-sn-glycero-3-phospho]-glycerol or CL), a key component of the mitochondrial inner membrane, with tissue specific acyl chains necessary for adequate mitochondrial function (By similarity). Its role in cellular physiology is to improve mitochondrial performance (By similarity). RCL is critical for the coassembly of lipids and proteins in mitochondrial membranes, for instance, remodeling of the acyl groups of CL in the mitochondrial inner membrane affects the assembly and stability of respiratory chain complex IV and its supercomplex forms (By similarity). Catalyzes the transacylation between phospholipids and lysophospholipids, with the highest rate being between phosphatidylcholine (1,2-diacyl-sn-glycero-3-phosphocholine or PC) and CL. Catalyzes both 1-acyl-sn-glycero-3-phosphocholine (lysophosphatidylcholine or LPC) reacylation and PC-CL transacylation, that means, it exchanges acyl groups between CL and PC by a combination of forward and reverse transacylations. Also catalyzes transacylations between other phospholipids such as phosphatidylethanolamine (1,2-diacyl-sn-glycero-3-phosphoethanolamine or PE) and CL, between PC and PE, and between PC and phosphatidate (1,2-diacyl-sn-glycero-3-phosphate or PA), although at lower rate. Not regiospecific, it transfers acyl groups into any of the sn-1 and sn-2 positions of the monolysocardiolipin (MLCL), which is an important prerequisite for uniformity and symmetry in CL acyl distribution. Cannot transacylate dilysocardiolipin (DLCL), thus, the role of MLCL is limited to that of an acyl acceptor. CoA-independent, it can reshuffle molecular species within a single phospholipid class. Redistributes fatty acids between MLCL, CL, and other lipids, which prolongs the half-life of CL. Its action is completely reversible, which allows for cyclic changes, such as fission and fusion or bending and flattening of the membrane. Hence, by contributing to the flexibility of the lipid composition, it plays an important role in the dynamics of mitochondria membranes. Essential for the final stage of spermatogenesis, spermatid individualization (By similarity). Required for the initiation of mitophagy (By similarity). Required to ensure progression of spermatocytes through meiosis (By similarity).</text>
</comment>
<comment type="catalytic activity">
    <reaction evidence="2">
        <text>a 1-acyl-sn-glycero-3-phosphate + a 1,2-diacyl-sn-glycero-3-phospho-(1'-sn-glycerol) = 1-acyl-sn-glycero-3-phospho-(1'-sn-glycerol) + a 1,2-diacyl-sn-glycero-3-phosphate</text>
        <dbReference type="Rhea" id="RHEA:67748"/>
        <dbReference type="ChEBI" id="CHEBI:57970"/>
        <dbReference type="ChEBI" id="CHEBI:58608"/>
        <dbReference type="ChEBI" id="CHEBI:64716"/>
        <dbReference type="ChEBI" id="CHEBI:64840"/>
    </reaction>
    <physiologicalReaction direction="left-to-right" evidence="2">
        <dbReference type="Rhea" id="RHEA:67749"/>
    </physiologicalReaction>
    <physiologicalReaction direction="right-to-left" evidence="2">
        <dbReference type="Rhea" id="RHEA:67750"/>
    </physiologicalReaction>
</comment>
<comment type="catalytic activity">
    <reaction evidence="2">
        <text>1-hexadecanoyl-2-(9Z,12Z-octadecadienoyl)-sn-glycero-3-phospho-(1'-sn-glycerol) + 1-(9Z-octadecenoyl)-sn-glycero-3-phosphate = 1-(9Z)-octadecenoyl-2-(9Z,12Z)-octadecadienoyl-sn-glycero-3-phosphate + 1-hexadecanoyl-sn-glycero-3-phospho-(1'-sn-glycerol)</text>
        <dbReference type="Rhea" id="RHEA:67752"/>
        <dbReference type="ChEBI" id="CHEBI:72840"/>
        <dbReference type="ChEBI" id="CHEBI:74544"/>
        <dbReference type="ChEBI" id="CHEBI:74563"/>
        <dbReference type="ChEBI" id="CHEBI:75158"/>
    </reaction>
    <physiologicalReaction direction="left-to-right" evidence="2">
        <dbReference type="Rhea" id="RHEA:67753"/>
    </physiologicalReaction>
    <physiologicalReaction direction="right-to-left" evidence="2">
        <dbReference type="Rhea" id="RHEA:67754"/>
    </physiologicalReaction>
</comment>
<comment type="catalytic activity">
    <reaction evidence="2">
        <text>1'-[1,2-diacyl-sn-glycero-3-phospho],3'-[1-acyl-sn-glycero-3-phospho]-glycerol + a 1,2-diacyl-sn-glycero-3-phosphocholine = a cardiolipin + a 1-acyl-sn-glycero-3-phosphocholine</text>
        <dbReference type="Rhea" id="RHEA:33731"/>
        <dbReference type="ChEBI" id="CHEBI:57643"/>
        <dbReference type="ChEBI" id="CHEBI:58168"/>
        <dbReference type="ChEBI" id="CHEBI:62237"/>
        <dbReference type="ChEBI" id="CHEBI:64743"/>
    </reaction>
    <physiologicalReaction direction="left-to-right" evidence="2">
        <dbReference type="Rhea" id="RHEA:33732"/>
    </physiologicalReaction>
    <physiologicalReaction direction="right-to-left" evidence="2">
        <dbReference type="Rhea" id="RHEA:33733"/>
    </physiologicalReaction>
</comment>
<comment type="catalytic activity">
    <reaction evidence="2">
        <text>1-hexadecanoyl-2-(9Z,12Z-octadecadienoyl)-sn-glycero-3-phosphocholine + 1-hexadecanoyl-sn-glycero-3-phosphocholine = 2-(9Z,12Z-octadecadienoyl)-sn-glycero-3-phosphocholine + 1,2-dihexadecanoyl-sn-glycero-3-phosphocholine</text>
        <dbReference type="Rhea" id="RHEA:68988"/>
        <dbReference type="ChEBI" id="CHEBI:72998"/>
        <dbReference type="ChEBI" id="CHEBI:72999"/>
        <dbReference type="ChEBI" id="CHEBI:73002"/>
        <dbReference type="ChEBI" id="CHEBI:76084"/>
    </reaction>
    <physiologicalReaction direction="left-to-right" evidence="2">
        <dbReference type="Rhea" id="RHEA:68989"/>
    </physiologicalReaction>
    <physiologicalReaction direction="right-to-left" evidence="2">
        <dbReference type="Rhea" id="RHEA:68990"/>
    </physiologicalReaction>
</comment>
<comment type="catalytic activity">
    <reaction evidence="2">
        <text>1,2-di-(9Z-octadecenoyl)-sn-glycero-3-phosphocholine + 1-hexadecanoyl-sn-glycero-3-phosphocholine = 1-hexadecanoyl-2-(9Z-octadecenoyl)-sn-glycero-3-phosphocholine + 1-(9Z-octadecenoyl)-sn-glycero-3-phosphocholine</text>
        <dbReference type="Rhea" id="RHEA:43816"/>
        <dbReference type="ChEBI" id="CHEBI:28610"/>
        <dbReference type="ChEBI" id="CHEBI:72998"/>
        <dbReference type="ChEBI" id="CHEBI:73001"/>
        <dbReference type="ChEBI" id="CHEBI:74669"/>
    </reaction>
    <physiologicalReaction direction="left-to-right" evidence="2">
        <dbReference type="Rhea" id="RHEA:43817"/>
    </physiologicalReaction>
    <physiologicalReaction direction="right-to-left" evidence="2">
        <dbReference type="Rhea" id="RHEA:43818"/>
    </physiologicalReaction>
</comment>
<comment type="subunit">
    <text evidence="2">Associates with multiple protein complexes.</text>
</comment>
<comment type="subcellular location">
    <subcellularLocation>
        <location evidence="2">Mitochondrion outer membrane</location>
        <topology evidence="2">Peripheral membrane protein</topology>
        <orientation evidence="2">Intermembrane side</orientation>
    </subcellularLocation>
    <subcellularLocation>
        <location evidence="2">Mitochondrion inner membrane</location>
        <topology evidence="2">Peripheral membrane protein</topology>
        <orientation evidence="2">Intermembrane side</orientation>
    </subcellularLocation>
</comment>
<comment type="domain">
    <text evidence="3">The HXXXXD motif is essential for acyltransferase activity.</text>
</comment>
<comment type="miscellaneous">
    <text evidence="2">The enzyme was named after a masochistic character Tafazzi, once popular on Italian television, apparently due to the difficulty encountered for its identification and characterization.</text>
</comment>
<comment type="similarity">
    <text evidence="7">Belongs to the taffazin family.</text>
</comment>
<dbReference type="EC" id="2.3.1.-" evidence="2"/>
<dbReference type="EMBL" id="AY621059">
    <property type="protein sequence ID" value="AAT45911.1"/>
    <property type="molecule type" value="mRNA"/>
</dbReference>
<dbReference type="EMBL" id="AY621052">
    <property type="protein sequence ID" value="AAT45908.1"/>
    <property type="molecule type" value="Genomic_DNA"/>
</dbReference>
<dbReference type="EMBL" id="AY621050">
    <property type="protein sequence ID" value="AAT45908.1"/>
    <property type="status" value="JOINED"/>
    <property type="molecule type" value="Genomic_DNA"/>
</dbReference>
<dbReference type="EMBL" id="AY621051">
    <property type="protein sequence ID" value="AAT45908.1"/>
    <property type="status" value="JOINED"/>
    <property type="molecule type" value="Genomic_DNA"/>
</dbReference>
<dbReference type="RefSeq" id="NP_001028086.1">
    <property type="nucleotide sequence ID" value="NM_001032914.1"/>
</dbReference>
<dbReference type="SMR" id="Q6IV77"/>
<dbReference type="FunCoup" id="Q6IV77">
    <property type="interactions" value="1243"/>
</dbReference>
<dbReference type="STRING" id="9544.ENSMMUP00000007268"/>
<dbReference type="Ensembl" id="ENSMMUT00000007740.4">
    <property type="protein sequence ID" value="ENSMMUP00000007270.2"/>
    <property type="gene ID" value="ENSMMUG00000005498.4"/>
</dbReference>
<dbReference type="GeneID" id="574297"/>
<dbReference type="KEGG" id="mcc:574297"/>
<dbReference type="CTD" id="6901"/>
<dbReference type="VEuPathDB" id="HostDB:ENSMMUG00000005498"/>
<dbReference type="VGNC" id="VGNC:78102">
    <property type="gene designation" value="TAFAZZIN"/>
</dbReference>
<dbReference type="GeneTree" id="ENSGT00390000018621"/>
<dbReference type="HOGENOM" id="CLU_046747_3_0_1"/>
<dbReference type="InParanoid" id="Q6IV77"/>
<dbReference type="OrthoDB" id="193467at2759"/>
<dbReference type="Proteomes" id="UP000006718">
    <property type="component" value="Chromosome X"/>
</dbReference>
<dbReference type="Bgee" id="ENSMMUG00000005498">
    <property type="expression patterns" value="Expressed in ileum and 21 other cell types or tissues"/>
</dbReference>
<dbReference type="ExpressionAtlas" id="Q6IV77">
    <property type="expression patterns" value="baseline and differential"/>
</dbReference>
<dbReference type="GO" id="GO:0005743">
    <property type="term" value="C:mitochondrial inner membrane"/>
    <property type="evidence" value="ECO:0007669"/>
    <property type="project" value="UniProtKB-SubCell"/>
</dbReference>
<dbReference type="GO" id="GO:0031966">
    <property type="term" value="C:mitochondrial membrane"/>
    <property type="evidence" value="ECO:0000318"/>
    <property type="project" value="GO_Central"/>
</dbReference>
<dbReference type="GO" id="GO:0005741">
    <property type="term" value="C:mitochondrial outer membrane"/>
    <property type="evidence" value="ECO:0007669"/>
    <property type="project" value="UniProtKB-SubCell"/>
</dbReference>
<dbReference type="GO" id="GO:0005739">
    <property type="term" value="C:mitochondrion"/>
    <property type="evidence" value="ECO:0000250"/>
    <property type="project" value="UniProtKB"/>
</dbReference>
<dbReference type="GO" id="GO:0047184">
    <property type="term" value="F:1-acylglycerophosphocholine O-acyltransferase activity"/>
    <property type="evidence" value="ECO:0000318"/>
    <property type="project" value="GO_Central"/>
</dbReference>
<dbReference type="GO" id="GO:0035965">
    <property type="term" value="P:cardiolipin acyl-chain remodeling"/>
    <property type="evidence" value="ECO:0000250"/>
    <property type="project" value="UniProtKB"/>
</dbReference>
<dbReference type="GO" id="GO:0032048">
    <property type="term" value="P:cardiolipin metabolic process"/>
    <property type="evidence" value="ECO:0000250"/>
    <property type="project" value="UniProtKB"/>
</dbReference>
<dbReference type="GO" id="GO:0007007">
    <property type="term" value="P:inner mitochondrial membrane organization"/>
    <property type="evidence" value="ECO:0000318"/>
    <property type="project" value="GO_Central"/>
</dbReference>
<dbReference type="CDD" id="cd07989">
    <property type="entry name" value="LPLAT_AGPAT-like"/>
    <property type="match status" value="1"/>
</dbReference>
<dbReference type="InterPro" id="IPR002123">
    <property type="entry name" value="Plipid/glycerol_acylTrfase"/>
</dbReference>
<dbReference type="InterPro" id="IPR000872">
    <property type="entry name" value="Tafazzin"/>
</dbReference>
<dbReference type="PANTHER" id="PTHR12497:SF0">
    <property type="entry name" value="TAFAZZIN"/>
    <property type="match status" value="1"/>
</dbReference>
<dbReference type="PANTHER" id="PTHR12497">
    <property type="entry name" value="TAZ PROTEIN TAFAZZIN"/>
    <property type="match status" value="1"/>
</dbReference>
<dbReference type="Pfam" id="PF01553">
    <property type="entry name" value="Acyltransferase"/>
    <property type="match status" value="1"/>
</dbReference>
<dbReference type="PRINTS" id="PR00979">
    <property type="entry name" value="TAFAZZIN"/>
</dbReference>
<dbReference type="SMART" id="SM00563">
    <property type="entry name" value="PlsC"/>
    <property type="match status" value="1"/>
</dbReference>
<dbReference type="SUPFAM" id="SSF69593">
    <property type="entry name" value="Glycerol-3-phosphate (1)-acyltransferase"/>
    <property type="match status" value="1"/>
</dbReference>
<sequence>MPLHVKWPFPAVPPLTWTLASSVVMGLVGTYSCFWTKYMNHLTVHNKEVLYELIENRGPATPLITVSNHQSCMDDPHLWGILKLRHIWNLKLMRWTPAAADICFTKELHSHFFSLGKCVPVCRGDGVYQKGMDFILEKLNHGDWVHIFPEGKVNMSSEFLRFKWGIGRLIAECHLNPIILPLWHVGMNDVLPNSPPYFPRFGQKITVLIGKPFSALPILERLRAENKSAVEMRKALTDFIQEEFQRLKTQAEQLHNHLQPGR</sequence>